<comment type="catalytic activity">
    <reaction evidence="1">
        <text>(S)-muconolactone = (4,5-dihydro-5-oxofuran-2-yl)-acetate</text>
        <dbReference type="Rhea" id="RHEA:12348"/>
        <dbReference type="ChEBI" id="CHEBI:58425"/>
        <dbReference type="ChEBI" id="CHEBI:58736"/>
        <dbReference type="EC" id="5.3.3.4"/>
    </reaction>
</comment>
<comment type="pathway">
    <text>Aromatic compound metabolism; beta-ketoadipate pathway; 5-oxo-4,5-dihydro-2-furylacetate from catechol: step 3/3.</text>
</comment>
<comment type="subunit">
    <text evidence="2">Homodecamer.</text>
</comment>
<comment type="similarity">
    <text evidence="3">Belongs to the muconolactone Delta-isomerase family.</text>
</comment>
<proteinExistence type="evidence at protein level"/>
<feature type="chain" id="PRO_0000089335" description="Muconolactone Delta-isomerase">
    <location>
        <begin position="1"/>
        <end position="92"/>
    </location>
</feature>
<feature type="sequence conflict" description="In Ref. 2; AA sequence." evidence="3" ref="2">
    <original>N</original>
    <variation>D</variation>
    <location>
        <position position="10"/>
    </location>
</feature>
<feature type="sequence conflict" description="In Ref. 2; AA sequence." evidence="3" ref="2">
    <original>D</original>
    <variation>N</variation>
    <location>
        <position position="14"/>
    </location>
</feature>
<feature type="sequence conflict" description="In Ref. 2; AA sequence." evidence="3" ref="2">
    <original>W</original>
    <variation>T</variation>
    <location>
        <position position="40"/>
    </location>
</feature>
<protein>
    <recommendedName>
        <fullName>Muconolactone Delta-isomerase</fullName>
        <shortName>MIase</shortName>
        <ecNumber evidence="1">5.3.3.4</ecNumber>
    </recommendedName>
</protein>
<dbReference type="EC" id="5.3.3.4" evidence="1"/>
<dbReference type="EMBL" id="CP000090">
    <property type="protein sequence ID" value="AAZ61055.1"/>
    <property type="molecule type" value="Genomic_DNA"/>
</dbReference>
<dbReference type="SMR" id="P80573"/>
<dbReference type="STRING" id="264198.Reut_A1690"/>
<dbReference type="KEGG" id="reu:Reut_A1690"/>
<dbReference type="eggNOG" id="COG4829">
    <property type="taxonomic scope" value="Bacteria"/>
</dbReference>
<dbReference type="HOGENOM" id="CLU_080702_2_0_4"/>
<dbReference type="OrthoDB" id="2889526at2"/>
<dbReference type="BioCyc" id="MetaCyc:MONOMER-14657"/>
<dbReference type="UniPathway" id="UPA00157">
    <property type="reaction ID" value="UER00260"/>
</dbReference>
<dbReference type="GO" id="GO:0016159">
    <property type="term" value="F:muconolactone delta-isomerase activity"/>
    <property type="evidence" value="ECO:0007669"/>
    <property type="project" value="UniProtKB-EC"/>
</dbReference>
<dbReference type="GO" id="GO:0042952">
    <property type="term" value="P:beta-ketoadipate pathway"/>
    <property type="evidence" value="ECO:0007669"/>
    <property type="project" value="UniProtKB-UniPathway"/>
</dbReference>
<dbReference type="Gene3D" id="3.30.70.1060">
    <property type="entry name" value="Dimeric alpha+beta barrel"/>
    <property type="match status" value="1"/>
</dbReference>
<dbReference type="InterPro" id="IPR011008">
    <property type="entry name" value="Dimeric_a/b-barrel"/>
</dbReference>
<dbReference type="InterPro" id="IPR026029">
    <property type="entry name" value="MLI_dom"/>
</dbReference>
<dbReference type="InterPro" id="IPR003464">
    <property type="entry name" value="Muconolactone_d_Isoase"/>
</dbReference>
<dbReference type="NCBIfam" id="TIGR03221">
    <property type="entry name" value="muco_delta"/>
    <property type="match status" value="1"/>
</dbReference>
<dbReference type="Pfam" id="PF02426">
    <property type="entry name" value="MIase"/>
    <property type="match status" value="1"/>
</dbReference>
<dbReference type="PIRSF" id="PIRSF001486">
    <property type="entry name" value="CatC"/>
    <property type="match status" value="1"/>
</dbReference>
<dbReference type="SUPFAM" id="SSF54909">
    <property type="entry name" value="Dimeric alpha+beta barrel"/>
    <property type="match status" value="1"/>
</dbReference>
<reference key="1">
    <citation type="journal article" date="2010" name="PLoS ONE">
        <title>The complete multipartite genome sequence of Cupriavidus necator JMP134, a versatile pollutant degrader.</title>
        <authorList>
            <person name="Lykidis A."/>
            <person name="Perez-Pantoja D."/>
            <person name="Ledger T."/>
            <person name="Mavromatis K."/>
            <person name="Anderson I.J."/>
            <person name="Ivanova N.N."/>
            <person name="Hooper S.D."/>
            <person name="Lapidus A."/>
            <person name="Lucas S."/>
            <person name="Gonzalez B."/>
            <person name="Kyrpides N.C."/>
        </authorList>
    </citation>
    <scope>NUCLEOTIDE SEQUENCE [LARGE SCALE GENOMIC DNA]</scope>
    <source>
        <strain>JMP134 / LMG 1197</strain>
    </source>
</reference>
<reference key="2">
    <citation type="journal article" date="1996" name="Eur. J. Biochem.">
        <title>Muconolactone isomerase of the 3-oxoadipate pathway catalyzes dechlorination of 5-chloro-substituted muconolactones.</title>
        <authorList>
            <person name="Prucha M."/>
            <person name="Peterseim A."/>
            <person name="Timmis K.N."/>
            <person name="Pieper D.H."/>
        </authorList>
    </citation>
    <scope>PROTEIN SEQUENCE OF 1-48</scope>
    <scope>SUBUNIT</scope>
    <scope>CHARACTERIZATION</scope>
</reference>
<name>CATC_CUPPJ</name>
<keyword id="KW-0058">Aromatic hydrocarbons catabolism</keyword>
<keyword id="KW-0903">Direct protein sequencing</keyword>
<keyword id="KW-0413">Isomerase</keyword>
<evidence type="ECO:0000250" key="1">
    <source>
        <dbReference type="UniProtKB" id="P00948"/>
    </source>
</evidence>
<evidence type="ECO:0000269" key="2">
    <source>
    </source>
</evidence>
<evidence type="ECO:0000305" key="3"/>
<organism>
    <name type="scientific">Cupriavidus pinatubonensis (strain JMP 134 / LMG 1197)</name>
    <name type="common">Cupriavidus necator (strain JMP 134)</name>
    <dbReference type="NCBI Taxonomy" id="264198"/>
    <lineage>
        <taxon>Bacteria</taxon>
        <taxon>Pseudomonadati</taxon>
        <taxon>Pseudomonadota</taxon>
        <taxon>Betaproteobacteria</taxon>
        <taxon>Burkholderiales</taxon>
        <taxon>Burkholderiaceae</taxon>
        <taxon>Cupriavidus</taxon>
    </lineage>
</organism>
<accession>P80573</accession>
<accession>Q470X8</accession>
<gene>
    <name type="primary">catC</name>
    <name type="ordered locus">Reut_A1690</name>
</gene>
<sequence>MLYLVRMDVNLPHDMPAAQADDIKAREKAYAQQLQHEGKWQQLYRVVGEYANYSIFDVGSHDELHTLLSGLPLFPYMKIHVTPLAKHPSSIR</sequence>